<dbReference type="EC" id="2.7.11.1"/>
<dbReference type="EMBL" id="AY179606">
    <property type="protein sequence ID" value="AAN85409.1"/>
    <property type="molecule type" value="Genomic_DNA"/>
</dbReference>
<dbReference type="RefSeq" id="NP_001296180.1">
    <property type="nucleotide sequence ID" value="NM_001309251.1"/>
</dbReference>
<dbReference type="SMR" id="Q8GUQ5"/>
<dbReference type="FunCoup" id="Q8GUQ5">
    <property type="interactions" value="1671"/>
</dbReference>
<dbReference type="STRING" id="4081.Q8GUQ5"/>
<dbReference type="GlyCosmos" id="Q8GUQ5">
    <property type="glycosylation" value="18 sites, No reported glycans"/>
</dbReference>
<dbReference type="iPTMnet" id="Q8GUQ5"/>
<dbReference type="PaxDb" id="4081-Solyc04g051510.1.1"/>
<dbReference type="EnsemblPlants" id="Solyc04g051510.1.1">
    <property type="protein sequence ID" value="Solyc04g051510.1.1.1"/>
    <property type="gene ID" value="Solyc04g051510.1"/>
</dbReference>
<dbReference type="GeneID" id="101261320"/>
<dbReference type="Gramene" id="Solyc04g051510.1.1">
    <property type="protein sequence ID" value="Solyc04g051510.1.1.1"/>
    <property type="gene ID" value="Solyc04g051510.1"/>
</dbReference>
<dbReference type="KEGG" id="sly:101261320"/>
<dbReference type="eggNOG" id="ENOG502QRF2">
    <property type="taxonomic scope" value="Eukaryota"/>
</dbReference>
<dbReference type="HOGENOM" id="CLU_000288_22_4_1"/>
<dbReference type="InParanoid" id="Q8GUQ5"/>
<dbReference type="OMA" id="GWVKLHA"/>
<dbReference type="OrthoDB" id="1371922at2759"/>
<dbReference type="PhylomeDB" id="Q8GUQ5"/>
<dbReference type="Proteomes" id="UP000004994">
    <property type="component" value="Chromosome 4"/>
</dbReference>
<dbReference type="GO" id="GO:0005886">
    <property type="term" value="C:plasma membrane"/>
    <property type="evidence" value="ECO:0000318"/>
    <property type="project" value="GO_Central"/>
</dbReference>
<dbReference type="GO" id="GO:0005524">
    <property type="term" value="F:ATP binding"/>
    <property type="evidence" value="ECO:0007669"/>
    <property type="project" value="UniProtKB-KW"/>
</dbReference>
<dbReference type="GO" id="GO:0106310">
    <property type="term" value="F:protein serine kinase activity"/>
    <property type="evidence" value="ECO:0007669"/>
    <property type="project" value="RHEA"/>
</dbReference>
<dbReference type="GO" id="GO:0004674">
    <property type="term" value="F:protein serine/threonine kinase activity"/>
    <property type="evidence" value="ECO:0000318"/>
    <property type="project" value="GO_Central"/>
</dbReference>
<dbReference type="GO" id="GO:0038023">
    <property type="term" value="F:signaling receptor activity"/>
    <property type="evidence" value="ECO:0000318"/>
    <property type="project" value="GO_Central"/>
</dbReference>
<dbReference type="GO" id="GO:0005496">
    <property type="term" value="F:steroid binding"/>
    <property type="evidence" value="ECO:0007669"/>
    <property type="project" value="UniProtKB-KW"/>
</dbReference>
<dbReference type="GO" id="GO:0050832">
    <property type="term" value="P:defense response to fungus"/>
    <property type="evidence" value="ECO:0007669"/>
    <property type="project" value="UniProtKB-ARBA"/>
</dbReference>
<dbReference type="GO" id="GO:0009755">
    <property type="term" value="P:hormone-mediated signaling pathway"/>
    <property type="evidence" value="ECO:0000318"/>
    <property type="project" value="GO_Central"/>
</dbReference>
<dbReference type="CDD" id="cd14066">
    <property type="entry name" value="STKc_IRAK"/>
    <property type="match status" value="1"/>
</dbReference>
<dbReference type="FunFam" id="1.10.510.10:FF:000291">
    <property type="entry name" value="Brassinosteroid LRR receptor kinase"/>
    <property type="match status" value="1"/>
</dbReference>
<dbReference type="FunFam" id="3.80.10.10:FF:000125">
    <property type="entry name" value="Brassinosteroid LRR receptor kinase"/>
    <property type="match status" value="1"/>
</dbReference>
<dbReference type="FunFam" id="3.80.10.10:FF:000111">
    <property type="entry name" value="LRR receptor-like serine/threonine-protein kinase ERECTA"/>
    <property type="match status" value="1"/>
</dbReference>
<dbReference type="FunFam" id="3.30.1490.310:FF:000001">
    <property type="entry name" value="Serine/threonine-protein kinase BRI1-like 1"/>
    <property type="match status" value="1"/>
</dbReference>
<dbReference type="FunFam" id="3.30.200.20:FF:000150">
    <property type="entry name" value="serine/threonine-protein kinase BRI1-like 2"/>
    <property type="match status" value="1"/>
</dbReference>
<dbReference type="Gene3D" id="3.30.1490.310">
    <property type="match status" value="1"/>
</dbReference>
<dbReference type="Gene3D" id="3.30.200.20">
    <property type="entry name" value="Phosphorylase Kinase, domain 1"/>
    <property type="match status" value="1"/>
</dbReference>
<dbReference type="Gene3D" id="3.80.10.10">
    <property type="entry name" value="Ribonuclease Inhibitor"/>
    <property type="match status" value="1"/>
</dbReference>
<dbReference type="Gene3D" id="1.10.510.10">
    <property type="entry name" value="Transferase(Phosphotransferase) domain 1"/>
    <property type="match status" value="1"/>
</dbReference>
<dbReference type="InterPro" id="IPR045381">
    <property type="entry name" value="BRI1_island_dom"/>
</dbReference>
<dbReference type="InterPro" id="IPR011009">
    <property type="entry name" value="Kinase-like_dom_sf"/>
</dbReference>
<dbReference type="InterPro" id="IPR001611">
    <property type="entry name" value="Leu-rich_rpt"/>
</dbReference>
<dbReference type="InterPro" id="IPR003591">
    <property type="entry name" value="Leu-rich_rpt_typical-subtyp"/>
</dbReference>
<dbReference type="InterPro" id="IPR032675">
    <property type="entry name" value="LRR_dom_sf"/>
</dbReference>
<dbReference type="InterPro" id="IPR013210">
    <property type="entry name" value="LRR_N_plant-typ"/>
</dbReference>
<dbReference type="InterPro" id="IPR000719">
    <property type="entry name" value="Prot_kinase_dom"/>
</dbReference>
<dbReference type="InterPro" id="IPR017441">
    <property type="entry name" value="Protein_kinase_ATP_BS"/>
</dbReference>
<dbReference type="InterPro" id="IPR008271">
    <property type="entry name" value="Ser/Thr_kinase_AS"/>
</dbReference>
<dbReference type="PANTHER" id="PTHR27000">
    <property type="entry name" value="LEUCINE-RICH REPEAT RECEPTOR-LIKE PROTEIN KINASE FAMILY PROTEIN-RELATED"/>
    <property type="match status" value="1"/>
</dbReference>
<dbReference type="PANTHER" id="PTHR27000:SF800">
    <property type="entry name" value="OS11G0197000 PROTEIN"/>
    <property type="match status" value="1"/>
</dbReference>
<dbReference type="Pfam" id="PF20141">
    <property type="entry name" value="Island"/>
    <property type="match status" value="1"/>
</dbReference>
<dbReference type="Pfam" id="PF00560">
    <property type="entry name" value="LRR_1"/>
    <property type="match status" value="9"/>
</dbReference>
<dbReference type="Pfam" id="PF13855">
    <property type="entry name" value="LRR_8"/>
    <property type="match status" value="2"/>
</dbReference>
<dbReference type="Pfam" id="PF08263">
    <property type="entry name" value="LRRNT_2"/>
    <property type="match status" value="1"/>
</dbReference>
<dbReference type="Pfam" id="PF00069">
    <property type="entry name" value="Pkinase"/>
    <property type="match status" value="1"/>
</dbReference>
<dbReference type="SMART" id="SM00369">
    <property type="entry name" value="LRR_TYP"/>
    <property type="match status" value="6"/>
</dbReference>
<dbReference type="SMART" id="SM00220">
    <property type="entry name" value="S_TKc"/>
    <property type="match status" value="1"/>
</dbReference>
<dbReference type="SUPFAM" id="SSF52058">
    <property type="entry name" value="L domain-like"/>
    <property type="match status" value="1"/>
</dbReference>
<dbReference type="SUPFAM" id="SSF56112">
    <property type="entry name" value="Protein kinase-like (PK-like)"/>
    <property type="match status" value="1"/>
</dbReference>
<dbReference type="SUPFAM" id="SSF52047">
    <property type="entry name" value="RNI-like"/>
    <property type="match status" value="2"/>
</dbReference>
<dbReference type="PROSITE" id="PS00107">
    <property type="entry name" value="PROTEIN_KINASE_ATP"/>
    <property type="match status" value="1"/>
</dbReference>
<dbReference type="PROSITE" id="PS50011">
    <property type="entry name" value="PROTEIN_KINASE_DOM"/>
    <property type="match status" value="1"/>
</dbReference>
<dbReference type="PROSITE" id="PS00108">
    <property type="entry name" value="PROTEIN_KINASE_ST"/>
    <property type="match status" value="1"/>
</dbReference>
<name>BRI1_SOLLC</name>
<accession>Q8GUQ5</accession>
<comment type="function">
    <text evidence="1">Receptor with a serine/threonine-protein kinase activity. Regulates, in response to brassinosteroid binding, a signaling cascade involved in plant development, including expression of light- and stress-regulated genes, promotion of cell elongation, normal leaf and chloroplast senescence, and flowering. May be involved in a feedback regulation of brassinosteroid biosynthesis. May be also involved in the perception of systemin, a peptide hormone responsible for the systemic activation of defense genes in leaves of wounded plants (By similarity).</text>
</comment>
<comment type="catalytic activity">
    <reaction>
        <text>L-seryl-[protein] + ATP = O-phospho-L-seryl-[protein] + ADP + H(+)</text>
        <dbReference type="Rhea" id="RHEA:17989"/>
        <dbReference type="Rhea" id="RHEA-COMP:9863"/>
        <dbReference type="Rhea" id="RHEA-COMP:11604"/>
        <dbReference type="ChEBI" id="CHEBI:15378"/>
        <dbReference type="ChEBI" id="CHEBI:29999"/>
        <dbReference type="ChEBI" id="CHEBI:30616"/>
        <dbReference type="ChEBI" id="CHEBI:83421"/>
        <dbReference type="ChEBI" id="CHEBI:456216"/>
        <dbReference type="EC" id="2.7.11.1"/>
    </reaction>
</comment>
<comment type="catalytic activity">
    <reaction>
        <text>L-threonyl-[protein] + ATP = O-phospho-L-threonyl-[protein] + ADP + H(+)</text>
        <dbReference type="Rhea" id="RHEA:46608"/>
        <dbReference type="Rhea" id="RHEA-COMP:11060"/>
        <dbReference type="Rhea" id="RHEA-COMP:11605"/>
        <dbReference type="ChEBI" id="CHEBI:15378"/>
        <dbReference type="ChEBI" id="CHEBI:30013"/>
        <dbReference type="ChEBI" id="CHEBI:30616"/>
        <dbReference type="ChEBI" id="CHEBI:61977"/>
        <dbReference type="ChEBI" id="CHEBI:456216"/>
        <dbReference type="EC" id="2.7.11.1"/>
    </reaction>
</comment>
<comment type="subcellular location">
    <subcellularLocation>
        <location>Cell membrane</location>
        <topology>Single-pass type I membrane protein</topology>
    </subcellularLocation>
</comment>
<comment type="domain">
    <text evidence="1">A 68 amino acid island between the 20th and the 21st LRR is essential for the binding of brassinosteroids.</text>
</comment>
<comment type="miscellaneous">
    <text>BRI1 is almost identical to SR160, a systemin receptor identified in Lycopersicon peruvianum. Competition experiments indicate that brassinosteroid and systemin are probably perceived by different regions of the receptor.</text>
</comment>
<comment type="similarity">
    <text evidence="3">Belongs to the protein kinase superfamily. Ser/Thr protein kinase family.</text>
</comment>
<sequence>MKAHKTVFNQHPLSLNKLFFVLLLIFFLPPASPAASVNGLYKDSQQLLSFKAALPPTPTLLQNWLSSTGPCSFTGVSCKNSRVSSIDLSNTFLSVDFSLVTSYLLPLSNLESLVLKNANLSGSLTSAAKSQCGVTLDSIDLAENTISGPISDISSFGVCSNLKSLNLSKNFLDPPGKEMLKAATFSLQVLDLSYNNISGFNLFPWVSSMGFVELEFFSLKGNKLAGSIPELDFKNLSYLDLSANNFSTVFPSFKDCSNLQHLDLSSNKFYGDIGSSLSSCGKLSFLNLTNNQFVGLVPKLPSESLQYLYLRGNDFQGVYPNQLADLCKTVVELDLSYNNFSGMVPESLGECSSLELVDISYNNFSGKLPVDTLSKLSNIKTMVLSFNKFVGGLPDSFSNLLKLETLDMSSNNLTGVIPSGICKDPMNNLKVLYLQNNLFKGPIPDSLSNCSQLVSLDLSFNYLTGSIPSSLGSLSKLKDLILWLNQLSGEIPQELMYLQALENLILDFNDLTGPIPASLSNCTKLNWISLSNNQLSGEIPASLGRLSNLAILKLGNNSISGNIPAELGNCQSLIWLDLNTNFLNGSIPPPLFKQSGNIAVALLTGKRYVYIKNDGSKECHGAGNLLEFGGIRQEQLDRISTRHPCNFTRVYRGITQPTFNHNGSMIFLDLSYNKLEGSIPKELGAMYYLSILNLGHNDLSGMIPQQLGGLKNVAILDLSYNRFNGTIPNSLTSLTLLGEIDLSNNNLSGMIPESAPFDTFPDYRFANNSLCGYPLPIPCSSGPKSDANQHQKSHRRQASLAGSVAMGLLFSLFCIFGLIIVAIETKKRRRKKEAALEAYMDGHSHSATANSAWKFTSAREALSINLAAFEKPLRKLTFADLLEATNGFHNDSLVGSGGFGDVYKAQLKDGSVVAIKKLIHVSGQGDREFTAEMETIGKIKHRNLVPLLGYCKVGEERLLVYEYMKYGSLEDVLHDRKKIGIKLNWPARRKIAIGAARGLAFLHHNCIPHIIHRDMKSSNVLLDENLEARVSDFGMARLMSAMDTHLSVSTLAGTPGYVPPEYYQSFRCSTKGDVYSYGVVLLELLTGKQPTDSADFGDNNLVGWVKLHAKGKITDVFDRELLKEDASIEIELLQHLKVACACLDDRHWKRPTMIQVMAMFKEIQAGSGMDSTSTIGADDVNFSGVEGGIEMGINGSIKEGNELSKHL</sequence>
<evidence type="ECO:0000250" key="1"/>
<evidence type="ECO:0000255" key="2"/>
<evidence type="ECO:0000255" key="3">
    <source>
        <dbReference type="PROSITE-ProRule" id="PRU00159"/>
    </source>
</evidence>
<evidence type="ECO:0000255" key="4">
    <source>
        <dbReference type="PROSITE-ProRule" id="PRU10027"/>
    </source>
</evidence>
<keyword id="KW-0067">ATP-binding</keyword>
<keyword id="KW-1003">Cell membrane</keyword>
<keyword id="KW-0325">Glycoprotein</keyword>
<keyword id="KW-0418">Kinase</keyword>
<keyword id="KW-0433">Leucine-rich repeat</keyword>
<keyword id="KW-0446">Lipid-binding</keyword>
<keyword id="KW-0472">Membrane</keyword>
<keyword id="KW-0547">Nucleotide-binding</keyword>
<keyword id="KW-0611">Plant defense</keyword>
<keyword id="KW-0675">Receptor</keyword>
<keyword id="KW-1185">Reference proteome</keyword>
<keyword id="KW-0677">Repeat</keyword>
<keyword id="KW-0723">Serine/threonine-protein kinase</keyword>
<keyword id="KW-0732">Signal</keyword>
<keyword id="KW-0754">Steroid-binding</keyword>
<keyword id="KW-0808">Transferase</keyword>
<keyword id="KW-0812">Transmembrane</keyword>
<keyword id="KW-1133">Transmembrane helix</keyword>
<protein>
    <recommendedName>
        <fullName>Brassinosteroid LRR receptor kinase</fullName>
        <ecNumber>2.7.11.1</ecNumber>
    </recommendedName>
    <alternativeName>
        <fullName>Altered brassinolide sensitivity 1</fullName>
    </alternativeName>
    <alternativeName>
        <fullName>Systemin receptor SR160</fullName>
    </alternativeName>
    <alternativeName>
        <fullName>tBRI1</fullName>
    </alternativeName>
</protein>
<organism>
    <name type="scientific">Solanum lycopersicum</name>
    <name type="common">Tomato</name>
    <name type="synonym">Lycopersicon esculentum</name>
    <dbReference type="NCBI Taxonomy" id="4081"/>
    <lineage>
        <taxon>Eukaryota</taxon>
        <taxon>Viridiplantae</taxon>
        <taxon>Streptophyta</taxon>
        <taxon>Embryophyta</taxon>
        <taxon>Tracheophyta</taxon>
        <taxon>Spermatophyta</taxon>
        <taxon>Magnoliopsida</taxon>
        <taxon>eudicotyledons</taxon>
        <taxon>Gunneridae</taxon>
        <taxon>Pentapetalae</taxon>
        <taxon>asterids</taxon>
        <taxon>lamiids</taxon>
        <taxon>Solanales</taxon>
        <taxon>Solanaceae</taxon>
        <taxon>Solanoideae</taxon>
        <taxon>Solaneae</taxon>
        <taxon>Solanum</taxon>
        <taxon>Solanum subgen. Lycopersicon</taxon>
    </lineage>
</organism>
<reference key="1">
    <citation type="journal article" date="2002" name="Plant Cell">
        <title>Cloning the tomato curl3 gene highlights the putative dual role of the leucine-rich repeat receptor kinase tBRI1/SR160 in plant steroid hormone and peptide hormone signaling.</title>
        <authorList>
            <person name="Montoya T."/>
            <person name="Nomura T."/>
            <person name="Farrar K."/>
            <person name="Kaneta T."/>
            <person name="Yokota T."/>
            <person name="Bishop G.J."/>
        </authorList>
    </citation>
    <scope>NUCLEOTIDE SEQUENCE [GENOMIC DNA]</scope>
    <scope>MUTANT CU3-ABS/ABS1</scope>
</reference>
<reference key="2">
    <citation type="journal article" date="2002" name="Proc. Natl. Acad. Sci. U.S.A.">
        <title>The systemin receptor SR160 from Lycopersicon peruvianum is a member of the LRR receptor kinase family.</title>
        <authorList>
            <person name="Scheer J.M."/>
            <person name="Ryan C.A. Jr."/>
        </authorList>
    </citation>
    <scope>SUBSTRATE-BINDING</scope>
</reference>
<gene>
    <name type="primary">CURL3</name>
</gene>
<proteinExistence type="evidence at protein level"/>
<feature type="signal peptide" evidence="2">
    <location>
        <begin position="1"/>
        <end position="34"/>
    </location>
</feature>
<feature type="chain" id="PRO_0000024306" description="Brassinosteroid LRR receptor kinase">
    <location>
        <begin position="35"/>
        <end position="1207"/>
    </location>
</feature>
<feature type="transmembrane region" description="Helical" evidence="2">
    <location>
        <begin position="803"/>
        <end position="823"/>
    </location>
</feature>
<feature type="repeat" description="LRR 1">
    <location>
        <begin position="109"/>
        <end position="131"/>
    </location>
</feature>
<feature type="repeat" description="LRR 2">
    <location>
        <begin position="135"/>
        <end position="157"/>
    </location>
</feature>
<feature type="repeat" description="LRR 3">
    <location>
        <begin position="161"/>
        <end position="181"/>
    </location>
</feature>
<feature type="repeat" description="LRR 4">
    <location>
        <begin position="186"/>
        <end position="207"/>
    </location>
</feature>
<feature type="repeat" description="LRR 5">
    <location>
        <begin position="213"/>
        <end position="234"/>
    </location>
</feature>
<feature type="repeat" description="LRR 6">
    <location>
        <begin position="235"/>
        <end position="257"/>
    </location>
</feature>
<feature type="repeat" description="LRR 7">
    <location>
        <begin position="258"/>
        <end position="280"/>
    </location>
</feature>
<feature type="repeat" description="LRR 8">
    <location>
        <begin position="282"/>
        <end position="304"/>
    </location>
</feature>
<feature type="repeat" description="LRR 9">
    <location>
        <begin position="305"/>
        <end position="325"/>
    </location>
</feature>
<feature type="repeat" description="LRR 10">
    <location>
        <begin position="329"/>
        <end position="350"/>
    </location>
</feature>
<feature type="repeat" description="LRR 11">
    <location>
        <begin position="353"/>
        <end position="374"/>
    </location>
</feature>
<feature type="repeat" description="LRR 12">
    <location>
        <begin position="378"/>
        <end position="400"/>
    </location>
</feature>
<feature type="repeat" description="LRR 13">
    <location>
        <begin position="402"/>
        <end position="423"/>
    </location>
</feature>
<feature type="repeat" description="LRR 14">
    <location>
        <begin position="428"/>
        <end position="450"/>
    </location>
</feature>
<feature type="repeat" description="LRR 15">
    <location>
        <begin position="452"/>
        <end position="474"/>
    </location>
</feature>
<feature type="repeat" description="LRR 16">
    <location>
        <begin position="476"/>
        <end position="499"/>
    </location>
</feature>
<feature type="repeat" description="LRR 17">
    <location>
        <begin position="500"/>
        <end position="523"/>
    </location>
</feature>
<feature type="repeat" description="LRR 18">
    <location>
        <begin position="524"/>
        <end position="547"/>
    </location>
</feature>
<feature type="repeat" description="LRR 19">
    <location>
        <begin position="548"/>
        <end position="570"/>
    </location>
</feature>
<feature type="repeat" description="LRR 20">
    <location>
        <begin position="572"/>
        <end position="594"/>
    </location>
</feature>
<feature type="repeat" description="LRR 21">
    <location>
        <begin position="664"/>
        <end position="686"/>
    </location>
</feature>
<feature type="repeat" description="LRR 22">
    <location>
        <begin position="688"/>
        <end position="711"/>
    </location>
</feature>
<feature type="repeat" description="LRR 23">
    <location>
        <begin position="712"/>
        <end position="735"/>
    </location>
</feature>
<feature type="repeat" description="LRR 24">
    <location>
        <begin position="736"/>
        <end position="758"/>
    </location>
</feature>
<feature type="domain" description="Protein kinase" evidence="3">
    <location>
        <begin position="888"/>
        <end position="1163"/>
    </location>
</feature>
<feature type="short sequence motif" description="Cys pair 1">
    <location>
        <begin position="71"/>
        <end position="78"/>
    </location>
</feature>
<feature type="short sequence motif" description="Cys pair 2">
    <location>
        <begin position="771"/>
        <end position="779"/>
    </location>
</feature>
<feature type="active site" description="Proton acceptor" evidence="3 4">
    <location>
        <position position="1014"/>
    </location>
</feature>
<feature type="binding site" evidence="3">
    <location>
        <begin position="894"/>
        <end position="902"/>
    </location>
    <ligand>
        <name>ATP</name>
        <dbReference type="ChEBI" id="CHEBI:30616"/>
    </ligand>
</feature>
<feature type="binding site" evidence="3">
    <location>
        <position position="916"/>
    </location>
    <ligand>
        <name>ATP</name>
        <dbReference type="ChEBI" id="CHEBI:30616"/>
    </ligand>
</feature>
<feature type="glycosylation site" description="N-linked (GlcNAc...) asparagine" evidence="2">
    <location>
        <position position="119"/>
    </location>
</feature>
<feature type="glycosylation site" description="N-linked (GlcNAc...) asparagine" evidence="2">
    <location>
        <position position="166"/>
    </location>
</feature>
<feature type="glycosylation site" description="N-linked (GlcNAc...) asparagine" evidence="2">
    <location>
        <position position="196"/>
    </location>
</feature>
<feature type="glycosylation site" description="N-linked (GlcNAc...) asparagine" evidence="2">
    <location>
        <position position="235"/>
    </location>
</feature>
<feature type="glycosylation site" description="N-linked (GlcNAc...) asparagine" evidence="2">
    <location>
        <position position="245"/>
    </location>
</feature>
<feature type="glycosylation site" description="N-linked (GlcNAc...) asparagine" evidence="2">
    <location>
        <position position="287"/>
    </location>
</feature>
<feature type="glycosylation site" description="N-linked (GlcNAc...) asparagine" evidence="2">
    <location>
        <position position="339"/>
    </location>
</feature>
<feature type="glycosylation site" description="N-linked (GlcNAc...) asparagine" evidence="2">
    <location>
        <position position="363"/>
    </location>
</feature>
<feature type="glycosylation site" description="N-linked (GlcNAc...) asparagine" evidence="2">
    <location>
        <position position="412"/>
    </location>
</feature>
<feature type="glycosylation site" description="N-linked (GlcNAc...) asparagine" evidence="2">
    <location>
        <position position="449"/>
    </location>
</feature>
<feature type="glycosylation site" description="N-linked (GlcNAc...) asparagine" evidence="2">
    <location>
        <position position="521"/>
    </location>
</feature>
<feature type="glycosylation site" description="N-linked (GlcNAc...) asparagine" evidence="2">
    <location>
        <position position="556"/>
    </location>
</feature>
<feature type="glycosylation site" description="N-linked (GlcNAc...) asparagine" evidence="2">
    <location>
        <position position="584"/>
    </location>
</feature>
<feature type="glycosylation site" description="N-linked (GlcNAc...) asparagine" evidence="2">
    <location>
        <position position="646"/>
    </location>
</feature>
<feature type="glycosylation site" description="N-linked (GlcNAc...) asparagine" evidence="2">
    <location>
        <position position="662"/>
    </location>
</feature>
<feature type="glycosylation site" description="N-linked (GlcNAc...) asparagine" evidence="2">
    <location>
        <position position="724"/>
    </location>
</feature>
<feature type="glycosylation site" description="N-linked (GlcNAc...) asparagine" evidence="2">
    <location>
        <position position="746"/>
    </location>
</feature>
<feature type="glycosylation site" description="N-linked (GlcNAc...) asparagine" evidence="2">
    <location>
        <position position="767"/>
    </location>
</feature>
<feature type="mutagenesis site" description="In cu3-abs; brassinosteroid-insensitive semi-dwarf mutant.">
    <original>H</original>
    <variation>Y</variation>
    <location>
        <position position="1012"/>
    </location>
</feature>